<protein>
    <recommendedName>
        <fullName evidence="1">Alkanesulfonate monooxygenase</fullName>
        <ecNumber evidence="1">1.14.14.5</ecNumber>
    </recommendedName>
    <alternativeName>
        <fullName evidence="1">FMNH2-dependent aliphatic sulfonate monooxygenase</fullName>
    </alternativeName>
</protein>
<comment type="function">
    <text evidence="1">Catalyzes the desulfonation of aliphatic sulfonates.</text>
</comment>
<comment type="catalytic activity">
    <reaction evidence="1">
        <text>an alkanesulfonate + FMNH2 + O2 = an aldehyde + FMN + sulfite + H2O + 2 H(+)</text>
        <dbReference type="Rhea" id="RHEA:23064"/>
        <dbReference type="ChEBI" id="CHEBI:15377"/>
        <dbReference type="ChEBI" id="CHEBI:15378"/>
        <dbReference type="ChEBI" id="CHEBI:15379"/>
        <dbReference type="ChEBI" id="CHEBI:17359"/>
        <dbReference type="ChEBI" id="CHEBI:17478"/>
        <dbReference type="ChEBI" id="CHEBI:57618"/>
        <dbReference type="ChEBI" id="CHEBI:58210"/>
        <dbReference type="ChEBI" id="CHEBI:134249"/>
        <dbReference type="EC" id="1.14.14.5"/>
    </reaction>
</comment>
<comment type="similarity">
    <text evidence="1">Belongs to the SsuD family.</text>
</comment>
<sequence length="382" mass="41507">MSLNIFWFLPTHGDGKYLGTSEGARAVDHGYLQQIAQAADRLGFGGVLIPTGRSCEDSWLVAASLIPVTQRLKFLVALRPGIISPTVAARQAATLDRLSNGRALFNLVTGGDPDELAGDGLHLNHQERYEASVEFTRIWRKVLEGENVDYDGKHIQVKGAKLLYPPIQQPRPPLYFGGSSEAAQDLAAEQVELYLTWGEPPAAVAEKIAQVREKAAAQGREVRFGIRLHVIVRETNEEAWAAAERLISHLDDDTISRAQASLARFDSVGQQRMAALHGGNRDNLEVSPNLWAGVGLVRGGAGTALVGDGPTVAARVKEYADLGIDTFIFSGYPHLEESYRVAELLFPHLDVQRPEQPKAGGYVSPFGEMVANDILPKSVSQS</sequence>
<reference key="1">
    <citation type="journal article" date="2002" name="Environ. Microbiol.">
        <title>Complete genome sequence and comparative analysis of the metabolically versatile Pseudomonas putida KT2440.</title>
        <authorList>
            <person name="Nelson K.E."/>
            <person name="Weinel C."/>
            <person name="Paulsen I.T."/>
            <person name="Dodson R.J."/>
            <person name="Hilbert H."/>
            <person name="Martins dos Santos V.A.P."/>
            <person name="Fouts D.E."/>
            <person name="Gill S.R."/>
            <person name="Pop M."/>
            <person name="Holmes M."/>
            <person name="Brinkac L.M."/>
            <person name="Beanan M.J."/>
            <person name="DeBoy R.T."/>
            <person name="Daugherty S.C."/>
            <person name="Kolonay J.F."/>
            <person name="Madupu R."/>
            <person name="Nelson W.C."/>
            <person name="White O."/>
            <person name="Peterson J.D."/>
            <person name="Khouri H.M."/>
            <person name="Hance I."/>
            <person name="Chris Lee P."/>
            <person name="Holtzapple E.K."/>
            <person name="Scanlan D."/>
            <person name="Tran K."/>
            <person name="Moazzez A."/>
            <person name="Utterback T.R."/>
            <person name="Rizzo M."/>
            <person name="Lee K."/>
            <person name="Kosack D."/>
            <person name="Moestl D."/>
            <person name="Wedler H."/>
            <person name="Lauber J."/>
            <person name="Stjepandic D."/>
            <person name="Hoheisel J."/>
            <person name="Straetz M."/>
            <person name="Heim S."/>
            <person name="Kiewitz C."/>
            <person name="Eisen J.A."/>
            <person name="Timmis K.N."/>
            <person name="Duesterhoeft A."/>
            <person name="Tuemmler B."/>
            <person name="Fraser C.M."/>
        </authorList>
    </citation>
    <scope>NUCLEOTIDE SEQUENCE [LARGE SCALE GENOMIC DNA]</scope>
    <source>
        <strain>ATCC 47054 / DSM 6125 / CFBP 8728 / NCIMB 11950 / KT2440</strain>
    </source>
</reference>
<name>SSUD_PSEPK</name>
<organism>
    <name type="scientific">Pseudomonas putida (strain ATCC 47054 / DSM 6125 / CFBP 8728 / NCIMB 11950 / KT2440)</name>
    <dbReference type="NCBI Taxonomy" id="160488"/>
    <lineage>
        <taxon>Bacteria</taxon>
        <taxon>Pseudomonadati</taxon>
        <taxon>Pseudomonadota</taxon>
        <taxon>Gammaproteobacteria</taxon>
        <taxon>Pseudomonadales</taxon>
        <taxon>Pseudomonadaceae</taxon>
        <taxon>Pseudomonas</taxon>
    </lineage>
</organism>
<keyword id="KW-0285">Flavoprotein</keyword>
<keyword id="KW-0288">FMN</keyword>
<keyword id="KW-0503">Monooxygenase</keyword>
<keyword id="KW-0560">Oxidoreductase</keyword>
<keyword id="KW-1185">Reference proteome</keyword>
<feature type="chain" id="PRO_0000216712" description="Alkanesulfonate monooxygenase">
    <location>
        <begin position="1"/>
        <end position="382"/>
    </location>
</feature>
<dbReference type="EC" id="1.14.14.5" evidence="1"/>
<dbReference type="EMBL" id="AE015451">
    <property type="protein sequence ID" value="AAN65870.1"/>
    <property type="molecule type" value="Genomic_DNA"/>
</dbReference>
<dbReference type="RefSeq" id="NP_742406.1">
    <property type="nucleotide sequence ID" value="NC_002947.4"/>
</dbReference>
<dbReference type="RefSeq" id="WP_003255833.1">
    <property type="nucleotide sequence ID" value="NZ_CP169744.1"/>
</dbReference>
<dbReference type="SMR" id="Q88R95"/>
<dbReference type="STRING" id="160488.PP_0238"/>
<dbReference type="PaxDb" id="160488-PP_0238"/>
<dbReference type="GeneID" id="83677499"/>
<dbReference type="KEGG" id="ppu:PP_0238"/>
<dbReference type="PATRIC" id="fig|160488.4.peg.254"/>
<dbReference type="eggNOG" id="COG2141">
    <property type="taxonomic scope" value="Bacteria"/>
</dbReference>
<dbReference type="HOGENOM" id="CLU_027853_1_0_6"/>
<dbReference type="OrthoDB" id="9814695at2"/>
<dbReference type="PhylomeDB" id="Q88R95"/>
<dbReference type="BioCyc" id="PPUT160488:G1G01-260-MONOMER"/>
<dbReference type="Proteomes" id="UP000000556">
    <property type="component" value="Chromosome"/>
</dbReference>
<dbReference type="GO" id="GO:0008726">
    <property type="term" value="F:alkanesulfonate monooxygenase activity"/>
    <property type="evidence" value="ECO:0007669"/>
    <property type="project" value="UniProtKB-UniRule"/>
</dbReference>
<dbReference type="GO" id="GO:0046306">
    <property type="term" value="P:alkanesulfonate catabolic process"/>
    <property type="evidence" value="ECO:0007669"/>
    <property type="project" value="TreeGrafter"/>
</dbReference>
<dbReference type="CDD" id="cd01094">
    <property type="entry name" value="Alkanesulfonate_monoxygenase"/>
    <property type="match status" value="1"/>
</dbReference>
<dbReference type="FunFam" id="3.20.20.30:FF:000001">
    <property type="entry name" value="Alkanesulfonate monooxygenase"/>
    <property type="match status" value="1"/>
</dbReference>
<dbReference type="Gene3D" id="3.20.20.30">
    <property type="entry name" value="Luciferase-like domain"/>
    <property type="match status" value="1"/>
</dbReference>
<dbReference type="HAMAP" id="MF_01229">
    <property type="entry name" value="Alkanesulf_monooxygen"/>
    <property type="match status" value="1"/>
</dbReference>
<dbReference type="InterPro" id="IPR019911">
    <property type="entry name" value="Alkanesulphonate_mOase_FMN-dep"/>
</dbReference>
<dbReference type="InterPro" id="IPR011251">
    <property type="entry name" value="Luciferase-like_dom"/>
</dbReference>
<dbReference type="InterPro" id="IPR036661">
    <property type="entry name" value="Luciferase-like_sf"/>
</dbReference>
<dbReference type="InterPro" id="IPR050172">
    <property type="entry name" value="SsuD_RutA_monooxygenase"/>
</dbReference>
<dbReference type="NCBIfam" id="TIGR03565">
    <property type="entry name" value="alk_sulf_monoox"/>
    <property type="match status" value="1"/>
</dbReference>
<dbReference type="NCBIfam" id="NF001939">
    <property type="entry name" value="PRK00719.1"/>
    <property type="match status" value="1"/>
</dbReference>
<dbReference type="PANTHER" id="PTHR42847">
    <property type="entry name" value="ALKANESULFONATE MONOOXYGENASE"/>
    <property type="match status" value="1"/>
</dbReference>
<dbReference type="PANTHER" id="PTHR42847:SF4">
    <property type="entry name" value="ALKANESULFONATE MONOOXYGENASE-RELATED"/>
    <property type="match status" value="1"/>
</dbReference>
<dbReference type="Pfam" id="PF00296">
    <property type="entry name" value="Bac_luciferase"/>
    <property type="match status" value="1"/>
</dbReference>
<dbReference type="SUPFAM" id="SSF51679">
    <property type="entry name" value="Bacterial luciferase-like"/>
    <property type="match status" value="1"/>
</dbReference>
<accession>Q88R95</accession>
<proteinExistence type="inferred from homology"/>
<evidence type="ECO:0000255" key="1">
    <source>
        <dbReference type="HAMAP-Rule" id="MF_01229"/>
    </source>
</evidence>
<gene>
    <name evidence="1" type="primary">ssuD</name>
    <name type="ordered locus">PP_0238</name>
</gene>